<name>ERPA_ECOSM</name>
<sequence length="114" mass="12100">MSDDVALPLEFTDAAANKVKSLIADEDNPNLKLRVYITGGGCSGFQYGFTFDDQVNEGDMTIEKQGVGLVVDPMSLQYLVGGSVDYTEGLEGSRFIVTNPNAKSTCGCGSSFSI</sequence>
<keyword id="KW-0408">Iron</keyword>
<keyword id="KW-0411">Iron-sulfur</keyword>
<keyword id="KW-0479">Metal-binding</keyword>
<feature type="chain" id="PRO_1000144916" description="Iron-sulfur cluster insertion protein ErpA">
    <location>
        <begin position="1"/>
        <end position="114"/>
    </location>
</feature>
<feature type="binding site" evidence="1">
    <location>
        <position position="42"/>
    </location>
    <ligand>
        <name>iron-sulfur cluster</name>
        <dbReference type="ChEBI" id="CHEBI:30408"/>
    </ligand>
</feature>
<feature type="binding site" evidence="1">
    <location>
        <position position="106"/>
    </location>
    <ligand>
        <name>iron-sulfur cluster</name>
        <dbReference type="ChEBI" id="CHEBI:30408"/>
    </ligand>
</feature>
<feature type="binding site" evidence="1">
    <location>
        <position position="108"/>
    </location>
    <ligand>
        <name>iron-sulfur cluster</name>
        <dbReference type="ChEBI" id="CHEBI:30408"/>
    </ligand>
</feature>
<protein>
    <recommendedName>
        <fullName evidence="1">Iron-sulfur cluster insertion protein ErpA</fullName>
    </recommendedName>
</protein>
<evidence type="ECO:0000255" key="1">
    <source>
        <dbReference type="HAMAP-Rule" id="MF_01380"/>
    </source>
</evidence>
<reference key="1">
    <citation type="journal article" date="2008" name="J. Bacteriol.">
        <title>Insights into the environmental resistance gene pool from the genome sequence of the multidrug-resistant environmental isolate Escherichia coli SMS-3-5.</title>
        <authorList>
            <person name="Fricke W.F."/>
            <person name="Wright M.S."/>
            <person name="Lindell A.H."/>
            <person name="Harkins D.M."/>
            <person name="Baker-Austin C."/>
            <person name="Ravel J."/>
            <person name="Stepanauskas R."/>
        </authorList>
    </citation>
    <scope>NUCLEOTIDE SEQUENCE [LARGE SCALE GENOMIC DNA]</scope>
    <source>
        <strain>SMS-3-5 / SECEC</strain>
    </source>
</reference>
<organism>
    <name type="scientific">Escherichia coli (strain SMS-3-5 / SECEC)</name>
    <dbReference type="NCBI Taxonomy" id="439855"/>
    <lineage>
        <taxon>Bacteria</taxon>
        <taxon>Pseudomonadati</taxon>
        <taxon>Pseudomonadota</taxon>
        <taxon>Gammaproteobacteria</taxon>
        <taxon>Enterobacterales</taxon>
        <taxon>Enterobacteriaceae</taxon>
        <taxon>Escherichia</taxon>
    </lineage>
</organism>
<proteinExistence type="inferred from homology"/>
<gene>
    <name evidence="1" type="primary">erpA</name>
    <name type="ordered locus">EcSMS35_0168</name>
</gene>
<dbReference type="EMBL" id="CP000970">
    <property type="protein sequence ID" value="ACB18076.1"/>
    <property type="molecule type" value="Genomic_DNA"/>
</dbReference>
<dbReference type="RefSeq" id="WP_001295564.1">
    <property type="nucleotide sequence ID" value="NC_010498.1"/>
</dbReference>
<dbReference type="SMR" id="B1LGV9"/>
<dbReference type="GeneID" id="93777270"/>
<dbReference type="KEGG" id="ecm:EcSMS35_0168"/>
<dbReference type="HOGENOM" id="CLU_069054_5_3_6"/>
<dbReference type="Proteomes" id="UP000007011">
    <property type="component" value="Chromosome"/>
</dbReference>
<dbReference type="GO" id="GO:0005829">
    <property type="term" value="C:cytosol"/>
    <property type="evidence" value="ECO:0007669"/>
    <property type="project" value="TreeGrafter"/>
</dbReference>
<dbReference type="GO" id="GO:0051537">
    <property type="term" value="F:2 iron, 2 sulfur cluster binding"/>
    <property type="evidence" value="ECO:0007669"/>
    <property type="project" value="UniProtKB-ARBA"/>
</dbReference>
<dbReference type="GO" id="GO:0051539">
    <property type="term" value="F:4 iron, 4 sulfur cluster binding"/>
    <property type="evidence" value="ECO:0007669"/>
    <property type="project" value="TreeGrafter"/>
</dbReference>
<dbReference type="GO" id="GO:0005506">
    <property type="term" value="F:iron ion binding"/>
    <property type="evidence" value="ECO:0007669"/>
    <property type="project" value="UniProtKB-UniRule"/>
</dbReference>
<dbReference type="GO" id="GO:0016226">
    <property type="term" value="P:iron-sulfur cluster assembly"/>
    <property type="evidence" value="ECO:0007669"/>
    <property type="project" value="UniProtKB-UniRule"/>
</dbReference>
<dbReference type="FunFam" id="2.60.300.12:FF:000002">
    <property type="entry name" value="Iron-sulfur cluster insertion protein ErpA"/>
    <property type="match status" value="1"/>
</dbReference>
<dbReference type="Gene3D" id="2.60.300.12">
    <property type="entry name" value="HesB-like domain"/>
    <property type="match status" value="1"/>
</dbReference>
<dbReference type="HAMAP" id="MF_01380">
    <property type="entry name" value="Fe_S_insert_ErpA"/>
    <property type="match status" value="1"/>
</dbReference>
<dbReference type="InterPro" id="IPR000361">
    <property type="entry name" value="FeS_biogenesis"/>
</dbReference>
<dbReference type="InterPro" id="IPR016092">
    <property type="entry name" value="FeS_cluster_insertion"/>
</dbReference>
<dbReference type="InterPro" id="IPR017870">
    <property type="entry name" value="FeS_cluster_insertion_CS"/>
</dbReference>
<dbReference type="InterPro" id="IPR023063">
    <property type="entry name" value="FeS_cluster_insertion_RrpA"/>
</dbReference>
<dbReference type="InterPro" id="IPR035903">
    <property type="entry name" value="HesB-like_dom_sf"/>
</dbReference>
<dbReference type="NCBIfam" id="TIGR00049">
    <property type="entry name" value="iron-sulfur cluster assembly accessory protein"/>
    <property type="match status" value="1"/>
</dbReference>
<dbReference type="NCBIfam" id="NF010147">
    <property type="entry name" value="PRK13623.1"/>
    <property type="match status" value="1"/>
</dbReference>
<dbReference type="PANTHER" id="PTHR43011">
    <property type="entry name" value="IRON-SULFUR CLUSTER ASSEMBLY 2 HOMOLOG, MITOCHONDRIAL"/>
    <property type="match status" value="1"/>
</dbReference>
<dbReference type="PANTHER" id="PTHR43011:SF1">
    <property type="entry name" value="IRON-SULFUR CLUSTER ASSEMBLY 2 HOMOLOG, MITOCHONDRIAL"/>
    <property type="match status" value="1"/>
</dbReference>
<dbReference type="Pfam" id="PF01521">
    <property type="entry name" value="Fe-S_biosyn"/>
    <property type="match status" value="1"/>
</dbReference>
<dbReference type="SUPFAM" id="SSF89360">
    <property type="entry name" value="HesB-like domain"/>
    <property type="match status" value="1"/>
</dbReference>
<dbReference type="PROSITE" id="PS01152">
    <property type="entry name" value="HESB"/>
    <property type="match status" value="1"/>
</dbReference>
<accession>B1LGV9</accession>
<comment type="function">
    <text evidence="1">Required for insertion of 4Fe-4S clusters for at least IspG.</text>
</comment>
<comment type="cofactor">
    <cofactor evidence="1">
        <name>iron-sulfur cluster</name>
        <dbReference type="ChEBI" id="CHEBI:30408"/>
    </cofactor>
    <text evidence="1">Binds 1 iron-sulfur cluster per subunit.</text>
</comment>
<comment type="subunit">
    <text evidence="1">Homodimer.</text>
</comment>
<comment type="similarity">
    <text evidence="1">Belongs to the HesB/IscA family.</text>
</comment>